<organism>
    <name type="scientific">Methanocaldococcus jannaschii (strain ATCC 43067 / DSM 2661 / JAL-1 / JCM 10045 / NBRC 100440)</name>
    <name type="common">Methanococcus jannaschii</name>
    <dbReference type="NCBI Taxonomy" id="243232"/>
    <lineage>
        <taxon>Archaea</taxon>
        <taxon>Methanobacteriati</taxon>
        <taxon>Methanobacteriota</taxon>
        <taxon>Methanomada group</taxon>
        <taxon>Methanococci</taxon>
        <taxon>Methanococcales</taxon>
        <taxon>Methanocaldococcaceae</taxon>
        <taxon>Methanocaldococcus</taxon>
    </lineage>
</organism>
<feature type="chain" id="PRO_0000087269" description="Putative flagella-related protein D">
    <location>
        <begin position="1"/>
        <end position="342"/>
    </location>
</feature>
<dbReference type="EMBL" id="L77117">
    <property type="protein sequence ID" value="AAB98898.1"/>
    <property type="molecule type" value="Genomic_DNA"/>
</dbReference>
<dbReference type="PIR" id="G64411">
    <property type="entry name" value="G64411"/>
</dbReference>
<dbReference type="RefSeq" id="WP_010870409.1">
    <property type="nucleotide sequence ID" value="NC_000909.1"/>
</dbReference>
<dbReference type="SMR" id="Q58305"/>
<dbReference type="FunCoup" id="Q58305">
    <property type="interactions" value="1"/>
</dbReference>
<dbReference type="STRING" id="243232.MJ_0895"/>
<dbReference type="PaxDb" id="243232-MJ_0895"/>
<dbReference type="EnsemblBacteria" id="AAB98898">
    <property type="protein sequence ID" value="AAB98898"/>
    <property type="gene ID" value="MJ_0895"/>
</dbReference>
<dbReference type="GeneID" id="1451784"/>
<dbReference type="KEGG" id="mja:MJ_0895"/>
<dbReference type="eggNOG" id="arCOG02964">
    <property type="taxonomic scope" value="Archaea"/>
</dbReference>
<dbReference type="HOGENOM" id="CLU_047519_0_0_2"/>
<dbReference type="InParanoid" id="Q58305"/>
<dbReference type="OrthoDB" id="121879at2157"/>
<dbReference type="Proteomes" id="UP000000805">
    <property type="component" value="Chromosome"/>
</dbReference>
<dbReference type="GO" id="GO:0097589">
    <property type="term" value="C:archaeal-type flagellum"/>
    <property type="evidence" value="ECO:0007669"/>
    <property type="project" value="UniProtKB-SubCell"/>
</dbReference>
<dbReference type="GO" id="GO:0097588">
    <property type="term" value="P:archaeal or bacterial-type flagellum-dependent cell motility"/>
    <property type="evidence" value="ECO:0007669"/>
    <property type="project" value="InterPro"/>
</dbReference>
<dbReference type="InterPro" id="IPR006752">
    <property type="entry name" value="Arch_fla_DE"/>
</dbReference>
<dbReference type="InterPro" id="IPR016682">
    <property type="entry name" value="FlaD_prd_arc"/>
</dbReference>
<dbReference type="InterPro" id="IPR052494">
    <property type="entry name" value="Flagella_assembly_related"/>
</dbReference>
<dbReference type="PANTHER" id="PTHR40698:SF1">
    <property type="entry name" value="FLAGELLA-RELATED PROTEIN D-RELATED"/>
    <property type="match status" value="1"/>
</dbReference>
<dbReference type="PANTHER" id="PTHR40698">
    <property type="entry name" value="FLAGELLA-RELATED PROTEIN E-RELATED-RELATED"/>
    <property type="match status" value="1"/>
</dbReference>
<dbReference type="Pfam" id="PF04659">
    <property type="entry name" value="Arch_fla_DE"/>
    <property type="match status" value="1"/>
</dbReference>
<dbReference type="PIRSF" id="PIRSF017066">
    <property type="entry name" value="FlaD_arch_prd"/>
    <property type="match status" value="1"/>
</dbReference>
<protein>
    <recommendedName>
        <fullName>Putative flagella-related protein D</fullName>
    </recommendedName>
</protein>
<gene>
    <name type="primary">flaD</name>
    <name type="ordered locus">MJ0895</name>
</gene>
<name>FLAD_METJA</name>
<proteinExistence type="predicted"/>
<accession>Q58305</accession>
<evidence type="ECO:0000305" key="1"/>
<keyword id="KW-0974">Archaeal flagellum</keyword>
<keyword id="KW-1185">Reference proteome</keyword>
<reference key="1">
    <citation type="journal article" date="1996" name="Science">
        <title>Complete genome sequence of the methanogenic archaeon, Methanococcus jannaschii.</title>
        <authorList>
            <person name="Bult C.J."/>
            <person name="White O."/>
            <person name="Olsen G.J."/>
            <person name="Zhou L."/>
            <person name="Fleischmann R.D."/>
            <person name="Sutton G.G."/>
            <person name="Blake J.A."/>
            <person name="FitzGerald L.M."/>
            <person name="Clayton R.A."/>
            <person name="Gocayne J.D."/>
            <person name="Kerlavage A.R."/>
            <person name="Dougherty B.A."/>
            <person name="Tomb J.-F."/>
            <person name="Adams M.D."/>
            <person name="Reich C.I."/>
            <person name="Overbeek R."/>
            <person name="Kirkness E.F."/>
            <person name="Weinstock K.G."/>
            <person name="Merrick J.M."/>
            <person name="Glodek A."/>
            <person name="Scott J.L."/>
            <person name="Geoghagen N.S.M."/>
            <person name="Weidman J.F."/>
            <person name="Fuhrmann J.L."/>
            <person name="Nguyen D."/>
            <person name="Utterback T.R."/>
            <person name="Kelley J.M."/>
            <person name="Peterson J.D."/>
            <person name="Sadow P.W."/>
            <person name="Hanna M.C."/>
            <person name="Cotton M.D."/>
            <person name="Roberts K.M."/>
            <person name="Hurst M.A."/>
            <person name="Kaine B.P."/>
            <person name="Borodovsky M."/>
            <person name="Klenk H.-P."/>
            <person name="Fraser C.M."/>
            <person name="Smith H.O."/>
            <person name="Woese C.R."/>
            <person name="Venter J.C."/>
        </authorList>
    </citation>
    <scope>NUCLEOTIDE SEQUENCE [LARGE SCALE GENOMIC DNA]</scope>
    <source>
        <strain>ATCC 43067 / DSM 2661 / JAL-1 / JCM 10045 / NBRC 100440</strain>
    </source>
</reference>
<comment type="subcellular location">
    <subcellularLocation>
        <location evidence="1">Archaeal flagellum</location>
    </subcellularLocation>
</comment>
<comment type="similarity">
    <text evidence="1">To M.voltae FlaD, also to FlaE.</text>
</comment>
<sequence>MIQKTISETSPPPMFSDEEILTEDEIEEYLDNLKSKLPSFVIILLKNNLRGKRVTKKQLDKIVERITEVLSKGRRDDKTEELNKKLQTLEQKLDAIMKLTTMAVSTKTSEEIEKIKTNEKIEIENAPIKIKSEEKPEKPVEIEVSKKKETMDTGKKTETEEKVKEIEVPKPVEKTHEKVEETKTKGEIKKEVKKEVKLKKYELPKESPMGGSFMTPIEEEKEYRLNDIPEDAVSMTLVFKWLEFLISRGGMTYLPDILDYYNKIGWISNRVILKLLRFAKNMKITFDEEELRPRDKLSPSDHIVSLLYIEKLAGRPIDSEILEMLEIEIRRIKKWAIELQSI</sequence>